<protein>
    <recommendedName>
        <fullName>Keratin-associated protein 1-5</fullName>
    </recommendedName>
    <alternativeName>
        <fullName>High sulfur keratin-associated protein 1.5</fullName>
    </alternativeName>
    <alternativeName>
        <fullName>Keratin-associated protein 1.5</fullName>
    </alternativeName>
</protein>
<evidence type="ECO:0000269" key="1">
    <source>
    </source>
</evidence>
<evidence type="ECO:0000305" key="2"/>
<gene>
    <name type="primary">KRTAP1-5</name>
    <name type="synonym">KAP1.5</name>
    <name type="synonym">KRTAP1.5</name>
</gene>
<sequence length="174" mass="18010">MTCCQTSFCGYPSFSISGTCGSSCCQPSCCETSCCQPRSCQTSFCGFPSFSTSGTCSSSCCQPSCCETSCCQPSCCETSCCQPSCCQISSCGTGCGIGGGISYGQEGSSGAVSTRIRWCRPDSRVEGTYLPPCCVVSCTPPSCCQLHHAQASCCRPSYCGQSCCRPVCCCEPTC</sequence>
<keyword id="KW-0416">Keratin</keyword>
<keyword id="KW-1267">Proteomics identification</keyword>
<keyword id="KW-1185">Reference proteome</keyword>
<keyword id="KW-0677">Repeat</keyword>
<comment type="function">
    <text>In the hair cortex, hair keratin intermediate filaments are embedded in an interfilamentous matrix, consisting of hair keratin-associated proteins (KRTAP), which are essential for the formation of a rigid and resistant hair shaft through their extensive disulfide bond cross-linking with abundant cysteine residues of hair keratins. The matrix proteins include the high-sulfur and high-glycine-tyrosine keratins.</text>
</comment>
<comment type="subunit">
    <text>Interacts with hair keratins.</text>
</comment>
<comment type="interaction">
    <interactant intactId="EBI-11741292">
        <id>Q9BYS1</id>
    </interactant>
    <interactant intactId="EBI-10173507">
        <id>Q6UY14-3</id>
        <label>ADAMTSL4</label>
    </interactant>
    <organismsDiffer>false</organismsDiffer>
    <experiments>3</experiments>
</comment>
<comment type="interaction">
    <interactant intactId="EBI-11741292">
        <id>Q9BYS1</id>
    </interactant>
    <interactant intactId="EBI-745213">
        <id>P29972</id>
        <label>AQP1</label>
    </interactant>
    <organismsDiffer>false</organismsDiffer>
    <experiments>3</experiments>
</comment>
<comment type="interaction">
    <interactant intactId="EBI-11741292">
        <id>Q9BYS1</id>
    </interactant>
    <interactant intactId="EBI-744545">
        <id>Q8NEC5</id>
        <label>CATSPER1</label>
    </interactant>
    <organismsDiffer>false</organismsDiffer>
    <experiments>3</experiments>
</comment>
<comment type="interaction">
    <interactant intactId="EBI-11741292">
        <id>Q9BYS1</id>
    </interactant>
    <interactant intactId="EBI-10192698">
        <id>Q02930-3</id>
        <label>CREB5</label>
    </interactant>
    <organismsDiffer>false</organismsDiffer>
    <experiments>5</experiments>
</comment>
<comment type="interaction">
    <interactant intactId="EBI-11741292">
        <id>Q9BYS1</id>
    </interactant>
    <interactant intactId="EBI-3870390">
        <id>P06850</id>
        <label>CRH</label>
    </interactant>
    <organismsDiffer>false</organismsDiffer>
    <experiments>3</experiments>
</comment>
<comment type="interaction">
    <interactant intactId="EBI-11741292">
        <id>Q9BYS1</id>
    </interactant>
    <interactant intactId="EBI-3867333">
        <id>A8MQ03</id>
        <label>CYSRT1</label>
    </interactant>
    <organismsDiffer>false</organismsDiffer>
    <experiments>3</experiments>
</comment>
<comment type="interaction">
    <interactant intactId="EBI-11741292">
        <id>Q9BYS1</id>
    </interactant>
    <interactant intactId="EBI-9679045">
        <id>Q9NQL9</id>
        <label>DMRT3</label>
    </interactant>
    <organismsDiffer>false</organismsDiffer>
    <experiments>3</experiments>
</comment>
<comment type="interaction">
    <interactant intactId="EBI-11741292">
        <id>Q9BYS1</id>
    </interactant>
    <interactant intactId="EBI-3943864">
        <id>Q8N9I5</id>
        <label>FADS6</label>
    </interactant>
    <organismsDiffer>false</organismsDiffer>
    <experiments>3</experiments>
</comment>
<comment type="interaction">
    <interactant intactId="EBI-11741292">
        <id>Q9BYS1</id>
    </interactant>
    <interactant intactId="EBI-11986315">
        <id>Q9H5Z6-2</id>
        <label>FAM124B</label>
    </interactant>
    <organismsDiffer>false</organismsDiffer>
    <experiments>3</experiments>
</comment>
<comment type="interaction">
    <interactant intactId="EBI-11741292">
        <id>Q9BYS1</id>
    </interactant>
    <interactant intactId="EBI-747754">
        <id>P28799</id>
        <label>GRN</label>
    </interactant>
    <organismsDiffer>false</organismsDiffer>
    <experiments>3</experiments>
</comment>
<comment type="interaction">
    <interactant intactId="EBI-11741292">
        <id>Q9BYS1</id>
    </interactant>
    <interactant intactId="EBI-11978177">
        <id>Q96NT3-2</id>
        <label>GUCD1</label>
    </interactant>
    <organismsDiffer>false</organismsDiffer>
    <experiments>3</experiments>
</comment>
<comment type="interaction">
    <interactant intactId="EBI-11741292">
        <id>Q9BYS1</id>
    </interactant>
    <interactant intactId="EBI-740785">
        <id>P49639</id>
        <label>HOXA1</label>
    </interactant>
    <organismsDiffer>false</organismsDiffer>
    <experiments>5</experiments>
</comment>
<comment type="interaction">
    <interactant intactId="EBI-11741292">
        <id>Q9BYS1</id>
    </interactant>
    <interactant intactId="EBI-745290">
        <id>P17482</id>
        <label>HOXB9</label>
    </interactant>
    <organismsDiffer>false</organismsDiffer>
    <experiments>3</experiments>
</comment>
<comment type="interaction">
    <interactant intactId="EBI-11741292">
        <id>Q9BYS1</id>
    </interactant>
    <interactant intactId="EBI-10981970">
        <id>Q5T749</id>
        <label>KPRP</label>
    </interactant>
    <organismsDiffer>false</organismsDiffer>
    <experiments>3</experiments>
</comment>
<comment type="interaction">
    <interactant intactId="EBI-11741292">
        <id>Q9BYS1</id>
    </interactant>
    <interactant intactId="EBI-10302392">
        <id>Q9BYQ6</id>
        <label>KRTAP4-11</label>
    </interactant>
    <organismsDiffer>false</organismsDiffer>
    <experiments>3</experiments>
</comment>
<comment type="interaction">
    <interactant intactId="EBI-11741292">
        <id>Q9BYS1</id>
    </interactant>
    <interactant intactId="EBI-10172511">
        <id>Q9BYR5</id>
        <label>KRTAP4-2</label>
    </interactant>
    <organismsDiffer>false</organismsDiffer>
    <experiments>3</experiments>
</comment>
<comment type="interaction">
    <interactant intactId="EBI-11741292">
        <id>Q9BYS1</id>
    </interactant>
    <interactant intactId="EBI-11958132">
        <id>Q9BYR3</id>
        <label>KRTAP4-4</label>
    </interactant>
    <organismsDiffer>false</organismsDiffer>
    <experiments>3</experiments>
</comment>
<comment type="interaction">
    <interactant intactId="EBI-11741292">
        <id>Q9BYS1</id>
    </interactant>
    <interactant intactId="EBI-11993296">
        <id>Q6L8G4</id>
        <label>KRTAP5-11</label>
    </interactant>
    <organismsDiffer>false</organismsDiffer>
    <experiments>3</experiments>
</comment>
<comment type="interaction">
    <interactant intactId="EBI-11741292">
        <id>Q9BYS1</id>
    </interactant>
    <interactant intactId="EBI-11974251">
        <id>Q6L8H2</id>
        <label>KRTAP5-3</label>
    </interactant>
    <organismsDiffer>false</organismsDiffer>
    <experiments>3</experiments>
</comment>
<comment type="interaction">
    <interactant intactId="EBI-11741292">
        <id>Q9BYS1</id>
    </interactant>
    <interactant intactId="EBI-10250562">
        <id>Q6L8G9</id>
        <label>KRTAP5-6</label>
    </interactant>
    <organismsDiffer>false</organismsDiffer>
    <experiments>3</experiments>
</comment>
<comment type="interaction">
    <interactant intactId="EBI-11741292">
        <id>Q9BYS1</id>
    </interactant>
    <interactant intactId="EBI-1044640">
        <id>Q9BYQ4</id>
        <label>KRTAP9-2</label>
    </interactant>
    <organismsDiffer>false</organismsDiffer>
    <experiments>3</experiments>
</comment>
<comment type="interaction">
    <interactant intactId="EBI-11741292">
        <id>Q9BYS1</id>
    </interactant>
    <interactant intactId="EBI-10245913">
        <id>Q5T7P3</id>
        <label>LCE1B</label>
    </interactant>
    <organismsDiffer>false</organismsDiffer>
    <experiments>4</experiments>
</comment>
<comment type="interaction">
    <interactant intactId="EBI-11741292">
        <id>Q9BYS1</id>
    </interactant>
    <interactant intactId="EBI-11741311">
        <id>Q5T752</id>
        <label>LCE1D</label>
    </interactant>
    <organismsDiffer>false</organismsDiffer>
    <experiments>5</experiments>
</comment>
<comment type="interaction">
    <interactant intactId="EBI-11741292">
        <id>Q9BYS1</id>
    </interactant>
    <interactant intactId="EBI-11955335">
        <id>Q5T753</id>
        <label>LCE1E</label>
    </interactant>
    <organismsDiffer>false</organismsDiffer>
    <experiments>3</experiments>
</comment>
<comment type="interaction">
    <interactant intactId="EBI-11741292">
        <id>Q9BYS1</id>
    </interactant>
    <interactant intactId="EBI-11478468">
        <id>O14633</id>
        <label>LCE2B</label>
    </interactant>
    <organismsDiffer>false</organismsDiffer>
    <experiments>3</experiments>
</comment>
<comment type="interaction">
    <interactant intactId="EBI-11741292">
        <id>Q9BYS1</id>
    </interactant>
    <interactant intactId="EBI-10246750">
        <id>Q5TA82</id>
        <label>LCE2D</label>
    </interactant>
    <organismsDiffer>false</organismsDiffer>
    <experiments>3</experiments>
</comment>
<comment type="interaction">
    <interactant intactId="EBI-11741292">
        <id>Q9BYS1</id>
    </interactant>
    <interactant intactId="EBI-9394625">
        <id>Q5TA76</id>
        <label>LCE3A</label>
    </interactant>
    <organismsDiffer>false</organismsDiffer>
    <experiments>4</experiments>
</comment>
<comment type="interaction">
    <interactant intactId="EBI-11741292">
        <id>Q9BYS1</id>
    </interactant>
    <interactant intactId="EBI-6658837">
        <id>Q9BYE3</id>
        <label>LCE3D</label>
    </interactant>
    <organismsDiffer>false</organismsDiffer>
    <experiments>3</experiments>
</comment>
<comment type="interaction">
    <interactant intactId="EBI-11741292">
        <id>Q9BYS1</id>
    </interactant>
    <interactant intactId="EBI-10246358">
        <id>Q5TA78</id>
        <label>LCE4A</label>
    </interactant>
    <organismsDiffer>false</organismsDiffer>
    <experiments>3</experiments>
</comment>
<comment type="interaction">
    <interactant intactId="EBI-11741292">
        <id>Q9BYS1</id>
    </interactant>
    <interactant intactId="EBI-11955689">
        <id>Q5TCM9</id>
        <label>LCE5A</label>
    </interactant>
    <organismsDiffer>false</organismsDiffer>
    <experiments>3</experiments>
</comment>
<comment type="interaction">
    <interactant intactId="EBI-11741292">
        <id>Q9BYS1</id>
    </interactant>
    <interactant intactId="EBI-10210351">
        <id>P48645</id>
        <label>NMU</label>
    </interactant>
    <organismsDiffer>false</organismsDiffer>
    <experiments>3</experiments>
</comment>
<comment type="interaction">
    <interactant intactId="EBI-11741292">
        <id>Q9BYS1</id>
    </interactant>
    <interactant intactId="EBI-1210753">
        <id>Q7Z417</id>
        <label>NUFIP2</label>
    </interactant>
    <organismsDiffer>false</organismsDiffer>
    <experiments>5</experiments>
</comment>
<comment type="interaction">
    <interactant intactId="EBI-11741292">
        <id>Q9BYS1</id>
    </interactant>
    <interactant intactId="EBI-740446">
        <id>P32242</id>
        <label>OTX1</label>
    </interactant>
    <organismsDiffer>false</organismsDiffer>
    <experiments>5</experiments>
</comment>
<comment type="interaction">
    <interactant intactId="EBI-11741292">
        <id>Q9BYS1</id>
    </interactant>
    <interactant intactId="EBI-769257">
        <id>Q9NRQ2</id>
        <label>PLSCR4</label>
    </interactant>
    <organismsDiffer>false</organismsDiffer>
    <experiments>3</experiments>
</comment>
<comment type="interaction">
    <interactant intactId="EBI-11741292">
        <id>Q9BYS1</id>
    </interactant>
    <interactant intactId="EBI-727004">
        <id>O00560</id>
        <label>SDCBP</label>
    </interactant>
    <organismsDiffer>false</organismsDiffer>
    <experiments>3</experiments>
</comment>
<comment type="interaction">
    <interactant intactId="EBI-11741292">
        <id>Q9BYS1</id>
    </interactant>
    <interactant intactId="EBI-11955083">
        <id>Q9NUL5-4</id>
        <label>SHFL</label>
    </interactant>
    <organismsDiffer>false</organismsDiffer>
    <experiments>3</experiments>
</comment>
<comment type="interaction">
    <interactant intactId="EBI-11741292">
        <id>Q9BYS1</id>
    </interactant>
    <interactant intactId="EBI-750494">
        <id>P49901</id>
        <label>SMCP</label>
    </interactant>
    <organismsDiffer>false</organismsDiffer>
    <experiments>3</experiments>
</comment>
<comment type="interaction">
    <interactant intactId="EBI-11741292">
        <id>Q9BYS1</id>
    </interactant>
    <interactant intactId="EBI-8058160">
        <id>O96014</id>
        <label>WNT11</label>
    </interactant>
    <organismsDiffer>false</organismsDiffer>
    <experiments>3</experiments>
</comment>
<comment type="interaction">
    <interactant intactId="EBI-11741292">
        <id>Q9BYS1</id>
    </interactant>
    <interactant intactId="EBI-765538">
        <id>P25490</id>
        <label>YY1</label>
    </interactant>
    <organismsDiffer>false</organismsDiffer>
    <experiments>3</experiments>
</comment>
<comment type="tissue specificity">
    <text evidence="1">Expressed in the middle/upper portions of the hair cortex, in the region termed the keratogenous zone.</text>
</comment>
<comment type="similarity">
    <text evidence="2">Belongs to the KRTAP type 1 family.</text>
</comment>
<dbReference type="EMBL" id="AJ406928">
    <property type="protein sequence ID" value="CAC27567.1"/>
    <property type="molecule type" value="mRNA"/>
</dbReference>
<dbReference type="EMBL" id="AC007455">
    <property type="status" value="NOT_ANNOTATED_CDS"/>
    <property type="molecule type" value="Genomic_DNA"/>
</dbReference>
<dbReference type="EMBL" id="CH471152">
    <property type="protein sequence ID" value="EAW60697.1"/>
    <property type="molecule type" value="Genomic_DNA"/>
</dbReference>
<dbReference type="EMBL" id="BC069533">
    <property type="protein sequence ID" value="AAH69533.1"/>
    <property type="molecule type" value="mRNA"/>
</dbReference>
<dbReference type="EMBL" id="BC093841">
    <property type="protein sequence ID" value="AAH93841.1"/>
    <property type="molecule type" value="mRNA"/>
</dbReference>
<dbReference type="EMBL" id="BC101555">
    <property type="protein sequence ID" value="AAI01556.1"/>
    <property type="molecule type" value="mRNA"/>
</dbReference>
<dbReference type="CCDS" id="CCDS42321.1"/>
<dbReference type="RefSeq" id="NP_114163.1">
    <property type="nucleotide sequence ID" value="NM_031957.2"/>
</dbReference>
<dbReference type="BioGRID" id="123806">
    <property type="interactions" value="47"/>
</dbReference>
<dbReference type="FunCoup" id="Q9BYS1">
    <property type="interactions" value="17"/>
</dbReference>
<dbReference type="IntAct" id="Q9BYS1">
    <property type="interactions" value="39"/>
</dbReference>
<dbReference type="STRING" id="9606.ENSP00000355302"/>
<dbReference type="BioMuta" id="KRTAP1-5"/>
<dbReference type="DMDM" id="56749988"/>
<dbReference type="MassIVE" id="Q9BYS1"/>
<dbReference type="PaxDb" id="9606-ENSP00000355302"/>
<dbReference type="PeptideAtlas" id="Q9BYS1"/>
<dbReference type="ProteomicsDB" id="79699"/>
<dbReference type="Antibodypedia" id="57659">
    <property type="antibodies" value="22 antibodies from 12 providers"/>
</dbReference>
<dbReference type="Ensembl" id="ENST00000361883.6">
    <property type="protein sequence ID" value="ENSP00000355302.5"/>
    <property type="gene ID" value="ENSG00000221852.5"/>
</dbReference>
<dbReference type="Ensembl" id="ENST00000572212.1">
    <property type="protein sequence ID" value="ENSP00000461651.1"/>
    <property type="gene ID" value="ENSG00000261862.2"/>
</dbReference>
<dbReference type="GeneID" id="83895"/>
<dbReference type="KEGG" id="hsa:83895"/>
<dbReference type="MANE-Select" id="ENST00000361883.6">
    <property type="protein sequence ID" value="ENSP00000355302.5"/>
    <property type="RefSeq nucleotide sequence ID" value="NM_031957.2"/>
    <property type="RefSeq protein sequence ID" value="NP_114163.1"/>
</dbReference>
<dbReference type="UCSC" id="uc002hvu.4">
    <property type="organism name" value="human"/>
</dbReference>
<dbReference type="AGR" id="HGNC:16777"/>
<dbReference type="CTD" id="83895"/>
<dbReference type="GeneCards" id="KRTAP1-5"/>
<dbReference type="HGNC" id="HGNC:16777">
    <property type="gene designation" value="KRTAP1-5"/>
</dbReference>
<dbReference type="HPA" id="ENSG00000221852">
    <property type="expression patterns" value="Tissue enriched (skin)"/>
</dbReference>
<dbReference type="MIM" id="608822">
    <property type="type" value="gene"/>
</dbReference>
<dbReference type="neXtProt" id="NX_Q9BYS1"/>
<dbReference type="OpenTargets" id="ENSG00000221852"/>
<dbReference type="PharmGKB" id="PA38417"/>
<dbReference type="VEuPathDB" id="HostDB:ENSG00000221852"/>
<dbReference type="eggNOG" id="KOG4726">
    <property type="taxonomic scope" value="Eukaryota"/>
</dbReference>
<dbReference type="GeneTree" id="ENSGT00940000160443"/>
<dbReference type="HOGENOM" id="CLU_109417_0_0_1"/>
<dbReference type="InParanoid" id="Q9BYS1"/>
<dbReference type="OMA" id="NCCEPTC"/>
<dbReference type="PAN-GO" id="Q9BYS1">
    <property type="GO annotations" value="0 GO annotations based on evolutionary models"/>
</dbReference>
<dbReference type="PhylomeDB" id="Q9BYS1"/>
<dbReference type="TreeFam" id="TF351356"/>
<dbReference type="PathwayCommons" id="Q9BYS1"/>
<dbReference type="Reactome" id="R-HSA-6805567">
    <property type="pathway name" value="Keratinization"/>
</dbReference>
<dbReference type="SignaLink" id="Q9BYS1"/>
<dbReference type="BioGRID-ORCS" id="83895">
    <property type="hits" value="9 hits in 1098 CRISPR screens"/>
</dbReference>
<dbReference type="GenomeRNAi" id="83895"/>
<dbReference type="Pharos" id="Q9BYS1">
    <property type="development level" value="Tdark"/>
</dbReference>
<dbReference type="PRO" id="PR:Q9BYS1"/>
<dbReference type="Proteomes" id="UP000005640">
    <property type="component" value="Chromosome 17"/>
</dbReference>
<dbReference type="RNAct" id="Q9BYS1">
    <property type="molecule type" value="protein"/>
</dbReference>
<dbReference type="Bgee" id="ENSG00000221852">
    <property type="expression patterns" value="Expressed in primordial germ cell in gonad and 45 other cell types or tissues"/>
</dbReference>
<dbReference type="GO" id="GO:0005829">
    <property type="term" value="C:cytosol"/>
    <property type="evidence" value="ECO:0000304"/>
    <property type="project" value="Reactome"/>
</dbReference>
<dbReference type="GO" id="GO:0045095">
    <property type="term" value="C:keratin filament"/>
    <property type="evidence" value="ECO:0007669"/>
    <property type="project" value="InterPro"/>
</dbReference>
<dbReference type="InterPro" id="IPR002494">
    <property type="entry name" value="KAP"/>
</dbReference>
<dbReference type="Pfam" id="PF01500">
    <property type="entry name" value="Keratin_B2"/>
    <property type="match status" value="1"/>
</dbReference>
<dbReference type="Pfam" id="PF13885">
    <property type="entry name" value="Keratin_B2_2"/>
    <property type="match status" value="1"/>
</dbReference>
<accession>Q9BYS1</accession>
<accession>A6NJW6</accession>
<accession>A6NLZ6</accession>
<accession>B6ZDR1</accession>
<accession>Q52LP6</accession>
<organism>
    <name type="scientific">Homo sapiens</name>
    <name type="common">Human</name>
    <dbReference type="NCBI Taxonomy" id="9606"/>
    <lineage>
        <taxon>Eukaryota</taxon>
        <taxon>Metazoa</taxon>
        <taxon>Chordata</taxon>
        <taxon>Craniata</taxon>
        <taxon>Vertebrata</taxon>
        <taxon>Euteleostomi</taxon>
        <taxon>Mammalia</taxon>
        <taxon>Eutheria</taxon>
        <taxon>Euarchontoglires</taxon>
        <taxon>Primates</taxon>
        <taxon>Haplorrhini</taxon>
        <taxon>Catarrhini</taxon>
        <taxon>Hominidae</taxon>
        <taxon>Homo</taxon>
    </lineage>
</organism>
<name>KRA15_HUMAN</name>
<reference key="1">
    <citation type="journal article" date="2001" name="J. Biol. Chem.">
        <title>Characterization of a cluster of human high/ultrahigh sulfur keratin-associated protein genes embedded in the type I keratin gene domain on chromosome 17q12-21.</title>
        <authorList>
            <person name="Rogers M.A."/>
            <person name="Langbein L."/>
            <person name="Winter H."/>
            <person name="Ehmann C."/>
            <person name="Praetzel S."/>
            <person name="Korn B."/>
            <person name="Schweizer J."/>
        </authorList>
    </citation>
    <scope>NUCLEOTIDE SEQUENCE [MRNA]</scope>
    <scope>TISSUE SPECIFICITY</scope>
    <source>
        <tissue>Scalp</tissue>
    </source>
</reference>
<reference key="2">
    <citation type="journal article" date="2006" name="Nature">
        <title>DNA sequence of human chromosome 17 and analysis of rearrangement in the human lineage.</title>
        <authorList>
            <person name="Zody M.C."/>
            <person name="Garber M."/>
            <person name="Adams D.J."/>
            <person name="Sharpe T."/>
            <person name="Harrow J."/>
            <person name="Lupski J.R."/>
            <person name="Nicholson C."/>
            <person name="Searle S.M."/>
            <person name="Wilming L."/>
            <person name="Young S.K."/>
            <person name="Abouelleil A."/>
            <person name="Allen N.R."/>
            <person name="Bi W."/>
            <person name="Bloom T."/>
            <person name="Borowsky M.L."/>
            <person name="Bugalter B.E."/>
            <person name="Butler J."/>
            <person name="Chang J.L."/>
            <person name="Chen C.-K."/>
            <person name="Cook A."/>
            <person name="Corum B."/>
            <person name="Cuomo C.A."/>
            <person name="de Jong P.J."/>
            <person name="DeCaprio D."/>
            <person name="Dewar K."/>
            <person name="FitzGerald M."/>
            <person name="Gilbert J."/>
            <person name="Gibson R."/>
            <person name="Gnerre S."/>
            <person name="Goldstein S."/>
            <person name="Grafham D.V."/>
            <person name="Grocock R."/>
            <person name="Hafez N."/>
            <person name="Hagopian D.S."/>
            <person name="Hart E."/>
            <person name="Norman C.H."/>
            <person name="Humphray S."/>
            <person name="Jaffe D.B."/>
            <person name="Jones M."/>
            <person name="Kamal M."/>
            <person name="Khodiyar V.K."/>
            <person name="LaButti K."/>
            <person name="Laird G."/>
            <person name="Lehoczky J."/>
            <person name="Liu X."/>
            <person name="Lokyitsang T."/>
            <person name="Loveland J."/>
            <person name="Lui A."/>
            <person name="Macdonald P."/>
            <person name="Major J.E."/>
            <person name="Matthews L."/>
            <person name="Mauceli E."/>
            <person name="McCarroll S.A."/>
            <person name="Mihalev A.H."/>
            <person name="Mudge J."/>
            <person name="Nguyen C."/>
            <person name="Nicol R."/>
            <person name="O'Leary S.B."/>
            <person name="Osoegawa K."/>
            <person name="Schwartz D.C."/>
            <person name="Shaw-Smith C."/>
            <person name="Stankiewicz P."/>
            <person name="Steward C."/>
            <person name="Swarbreck D."/>
            <person name="Venkataraman V."/>
            <person name="Whittaker C.A."/>
            <person name="Yang X."/>
            <person name="Zimmer A.R."/>
            <person name="Bradley A."/>
            <person name="Hubbard T."/>
            <person name="Birren B.W."/>
            <person name="Rogers J."/>
            <person name="Lander E.S."/>
            <person name="Nusbaum C."/>
        </authorList>
    </citation>
    <scope>NUCLEOTIDE SEQUENCE [LARGE SCALE GENOMIC DNA]</scope>
</reference>
<reference key="3">
    <citation type="submission" date="2005-07" db="EMBL/GenBank/DDBJ databases">
        <authorList>
            <person name="Mural R.J."/>
            <person name="Istrail S."/>
            <person name="Sutton G.G."/>
            <person name="Florea L."/>
            <person name="Halpern A.L."/>
            <person name="Mobarry C.M."/>
            <person name="Lippert R."/>
            <person name="Walenz B."/>
            <person name="Shatkay H."/>
            <person name="Dew I."/>
            <person name="Miller J.R."/>
            <person name="Flanigan M.J."/>
            <person name="Edwards N.J."/>
            <person name="Bolanos R."/>
            <person name="Fasulo D."/>
            <person name="Halldorsson B.V."/>
            <person name="Hannenhalli S."/>
            <person name="Turner R."/>
            <person name="Yooseph S."/>
            <person name="Lu F."/>
            <person name="Nusskern D.R."/>
            <person name="Shue B.C."/>
            <person name="Zheng X.H."/>
            <person name="Zhong F."/>
            <person name="Delcher A.L."/>
            <person name="Huson D.H."/>
            <person name="Kravitz S.A."/>
            <person name="Mouchard L."/>
            <person name="Reinert K."/>
            <person name="Remington K.A."/>
            <person name="Clark A.G."/>
            <person name="Waterman M.S."/>
            <person name="Eichler E.E."/>
            <person name="Adams M.D."/>
            <person name="Hunkapiller M.W."/>
            <person name="Myers E.W."/>
            <person name="Venter J.C."/>
        </authorList>
    </citation>
    <scope>NUCLEOTIDE SEQUENCE [LARGE SCALE GENOMIC DNA]</scope>
</reference>
<reference key="4">
    <citation type="journal article" date="2004" name="Genome Res.">
        <title>The status, quality, and expansion of the NIH full-length cDNA project: the Mammalian Gene Collection (MGC).</title>
        <authorList>
            <consortium name="The MGC Project Team"/>
        </authorList>
    </citation>
    <scope>NUCLEOTIDE SEQUENCE [LARGE SCALE MRNA]</scope>
    <source>
        <tissue>Placenta</tissue>
    </source>
</reference>
<proteinExistence type="evidence at protein level"/>
<feature type="chain" id="PRO_0000185161" description="Keratin-associated protein 1-5">
    <location>
        <begin position="1"/>
        <end position="174"/>
    </location>
</feature>
<feature type="region of interest" description="15 X 5 AA repeats of C-C-[QEPVRC]-[TPIVLE]-[SRHVP]">
    <location>
        <begin position="3"/>
        <end position="172"/>
    </location>
</feature>